<proteinExistence type="inferred from homology"/>
<reference key="1">
    <citation type="journal article" date="2003" name="Proc. Natl. Acad. Sci. U.S.A.">
        <title>Complete genome sequence and analysis of Wolinella succinogenes.</title>
        <authorList>
            <person name="Baar C."/>
            <person name="Eppinger M."/>
            <person name="Raddatz G."/>
            <person name="Simon J."/>
            <person name="Lanz C."/>
            <person name="Klimmek O."/>
            <person name="Nandakumar R."/>
            <person name="Gross R."/>
            <person name="Rosinus A."/>
            <person name="Keller H."/>
            <person name="Jagtap P."/>
            <person name="Linke B."/>
            <person name="Meyer F."/>
            <person name="Lederer H."/>
            <person name="Schuster S.C."/>
        </authorList>
    </citation>
    <scope>NUCLEOTIDE SEQUENCE [LARGE SCALE GENOMIC DNA]</scope>
    <source>
        <strain>ATCC 29543 / DSM 1740 / CCUG 13145 / JCM 31913 / LMG 7466 / NCTC 11488 / FDC 602W</strain>
    </source>
</reference>
<sequence length="305" mass="34168">MIRVLFMGTPAYAKTILEALWFSEEVEVVGVVSQPDKPVGRRQELTPPPVKESCLRLAPHTPLFQPENLKEERWAKEWRALEPDFIVVAAYGKILPKVILDIAPCINLHASILPLYRGASPIHESLRRGDAWSGVSAMRMEEGLDCGEVLGCSFVEIKEEWGVSRLFEELANRAAALTLKVLKRFSEIRPLPQVGADSSYCRKIRKEEGLVGFVNAKELYDQFRAYKVWPGIFLRSELKLKEITLLSETGEHHMGEILAINKEGVVVGCKEGSLRILMVQAPSKKEVDAVSYVNGKRLGVGDILF</sequence>
<keyword id="KW-0648">Protein biosynthesis</keyword>
<keyword id="KW-1185">Reference proteome</keyword>
<keyword id="KW-0808">Transferase</keyword>
<protein>
    <recommendedName>
        <fullName evidence="1">Methionyl-tRNA formyltransferase</fullName>
        <ecNumber evidence="1">2.1.2.9</ecNumber>
    </recommendedName>
</protein>
<name>FMT_WOLSU</name>
<dbReference type="EC" id="2.1.2.9" evidence="1"/>
<dbReference type="EMBL" id="BX571658">
    <property type="protein sequence ID" value="CAE09644.1"/>
    <property type="molecule type" value="Genomic_DNA"/>
</dbReference>
<dbReference type="RefSeq" id="WP_011138444.1">
    <property type="nucleotide sequence ID" value="NC_005090.1"/>
</dbReference>
<dbReference type="SMR" id="Q7MA26"/>
<dbReference type="STRING" id="273121.WS0507"/>
<dbReference type="KEGG" id="wsu:WS0507"/>
<dbReference type="eggNOG" id="COG0223">
    <property type="taxonomic scope" value="Bacteria"/>
</dbReference>
<dbReference type="HOGENOM" id="CLU_033347_1_1_7"/>
<dbReference type="Proteomes" id="UP000000422">
    <property type="component" value="Chromosome"/>
</dbReference>
<dbReference type="GO" id="GO:0005829">
    <property type="term" value="C:cytosol"/>
    <property type="evidence" value="ECO:0007669"/>
    <property type="project" value="TreeGrafter"/>
</dbReference>
<dbReference type="GO" id="GO:0004479">
    <property type="term" value="F:methionyl-tRNA formyltransferase activity"/>
    <property type="evidence" value="ECO:0007669"/>
    <property type="project" value="UniProtKB-UniRule"/>
</dbReference>
<dbReference type="CDD" id="cd08646">
    <property type="entry name" value="FMT_core_Met-tRNA-FMT_N"/>
    <property type="match status" value="1"/>
</dbReference>
<dbReference type="CDD" id="cd08704">
    <property type="entry name" value="Met_tRNA_FMT_C"/>
    <property type="match status" value="1"/>
</dbReference>
<dbReference type="Gene3D" id="3.40.50.12230">
    <property type="match status" value="1"/>
</dbReference>
<dbReference type="HAMAP" id="MF_00182">
    <property type="entry name" value="Formyl_trans"/>
    <property type="match status" value="1"/>
</dbReference>
<dbReference type="InterPro" id="IPR005794">
    <property type="entry name" value="Fmt"/>
</dbReference>
<dbReference type="InterPro" id="IPR005793">
    <property type="entry name" value="Formyl_trans_C"/>
</dbReference>
<dbReference type="InterPro" id="IPR002376">
    <property type="entry name" value="Formyl_transf_N"/>
</dbReference>
<dbReference type="InterPro" id="IPR036477">
    <property type="entry name" value="Formyl_transf_N_sf"/>
</dbReference>
<dbReference type="InterPro" id="IPR011034">
    <property type="entry name" value="Formyl_transferase-like_C_sf"/>
</dbReference>
<dbReference type="InterPro" id="IPR044135">
    <property type="entry name" value="Met-tRNA-FMT_C"/>
</dbReference>
<dbReference type="InterPro" id="IPR041711">
    <property type="entry name" value="Met-tRNA-FMT_N"/>
</dbReference>
<dbReference type="NCBIfam" id="TIGR00460">
    <property type="entry name" value="fmt"/>
    <property type="match status" value="1"/>
</dbReference>
<dbReference type="PANTHER" id="PTHR11138">
    <property type="entry name" value="METHIONYL-TRNA FORMYLTRANSFERASE"/>
    <property type="match status" value="1"/>
</dbReference>
<dbReference type="PANTHER" id="PTHR11138:SF5">
    <property type="entry name" value="METHIONYL-TRNA FORMYLTRANSFERASE, MITOCHONDRIAL"/>
    <property type="match status" value="1"/>
</dbReference>
<dbReference type="Pfam" id="PF02911">
    <property type="entry name" value="Formyl_trans_C"/>
    <property type="match status" value="1"/>
</dbReference>
<dbReference type="Pfam" id="PF00551">
    <property type="entry name" value="Formyl_trans_N"/>
    <property type="match status" value="1"/>
</dbReference>
<dbReference type="SUPFAM" id="SSF50486">
    <property type="entry name" value="FMT C-terminal domain-like"/>
    <property type="match status" value="1"/>
</dbReference>
<dbReference type="SUPFAM" id="SSF53328">
    <property type="entry name" value="Formyltransferase"/>
    <property type="match status" value="1"/>
</dbReference>
<evidence type="ECO:0000255" key="1">
    <source>
        <dbReference type="HAMAP-Rule" id="MF_00182"/>
    </source>
</evidence>
<comment type="function">
    <text evidence="1">Attaches a formyl group to the free amino group of methionyl-tRNA(fMet). The formyl group appears to play a dual role in the initiator identity of N-formylmethionyl-tRNA by promoting its recognition by IF2 and preventing the misappropriation of this tRNA by the elongation apparatus.</text>
</comment>
<comment type="catalytic activity">
    <reaction evidence="1">
        <text>L-methionyl-tRNA(fMet) + (6R)-10-formyltetrahydrofolate = N-formyl-L-methionyl-tRNA(fMet) + (6S)-5,6,7,8-tetrahydrofolate + H(+)</text>
        <dbReference type="Rhea" id="RHEA:24380"/>
        <dbReference type="Rhea" id="RHEA-COMP:9952"/>
        <dbReference type="Rhea" id="RHEA-COMP:9953"/>
        <dbReference type="ChEBI" id="CHEBI:15378"/>
        <dbReference type="ChEBI" id="CHEBI:57453"/>
        <dbReference type="ChEBI" id="CHEBI:78530"/>
        <dbReference type="ChEBI" id="CHEBI:78844"/>
        <dbReference type="ChEBI" id="CHEBI:195366"/>
        <dbReference type="EC" id="2.1.2.9"/>
    </reaction>
</comment>
<comment type="similarity">
    <text evidence="1">Belongs to the Fmt family.</text>
</comment>
<organism>
    <name type="scientific">Wolinella succinogenes (strain ATCC 29543 / DSM 1740 / CCUG 13145 / JCM 31913 / LMG 7466 / NCTC 11488 / FDC 602W)</name>
    <name type="common">Vibrio succinogenes</name>
    <dbReference type="NCBI Taxonomy" id="273121"/>
    <lineage>
        <taxon>Bacteria</taxon>
        <taxon>Pseudomonadati</taxon>
        <taxon>Campylobacterota</taxon>
        <taxon>Epsilonproteobacteria</taxon>
        <taxon>Campylobacterales</taxon>
        <taxon>Helicobacteraceae</taxon>
        <taxon>Wolinella</taxon>
    </lineage>
</organism>
<gene>
    <name evidence="1" type="primary">fmt</name>
    <name type="ordered locus">WS0507</name>
</gene>
<accession>Q7MA26</accession>
<feature type="chain" id="PRO_0000083087" description="Methionyl-tRNA formyltransferase">
    <location>
        <begin position="1"/>
        <end position="305"/>
    </location>
</feature>
<feature type="binding site" evidence="1">
    <location>
        <begin position="111"/>
        <end position="114"/>
    </location>
    <ligand>
        <name>(6S)-5,6,7,8-tetrahydrofolate</name>
        <dbReference type="ChEBI" id="CHEBI:57453"/>
    </ligand>
</feature>